<organism>
    <name type="scientific">Drosophila melanogaster</name>
    <name type="common">Fruit fly</name>
    <dbReference type="NCBI Taxonomy" id="7227"/>
    <lineage>
        <taxon>Eukaryota</taxon>
        <taxon>Metazoa</taxon>
        <taxon>Ecdysozoa</taxon>
        <taxon>Arthropoda</taxon>
        <taxon>Hexapoda</taxon>
        <taxon>Insecta</taxon>
        <taxon>Pterygota</taxon>
        <taxon>Neoptera</taxon>
        <taxon>Endopterygota</taxon>
        <taxon>Diptera</taxon>
        <taxon>Brachycera</taxon>
        <taxon>Muscomorpha</taxon>
        <taxon>Ephydroidea</taxon>
        <taxon>Drosophilidae</taxon>
        <taxon>Drosophila</taxon>
        <taxon>Sophophora</taxon>
    </lineage>
</organism>
<protein>
    <recommendedName>
        <fullName evidence="3">FGFR1 oncogene partner 2 homolog</fullName>
    </recommendedName>
</protein>
<name>FGOP2_DROME</name>
<accession>Q9VM65</accession>
<dbReference type="EMBL" id="AE014134">
    <property type="protein sequence ID" value="AAF52460.1"/>
    <property type="molecule type" value="Genomic_DNA"/>
</dbReference>
<dbReference type="EMBL" id="BT005202">
    <property type="protein sequence ID" value="AAO61759.1"/>
    <property type="molecule type" value="mRNA"/>
</dbReference>
<dbReference type="RefSeq" id="NP_001260171.1">
    <property type="nucleotide sequence ID" value="NM_001273242.1"/>
</dbReference>
<dbReference type="RefSeq" id="NP_609084.1">
    <property type="nucleotide sequence ID" value="NM_135240.4"/>
</dbReference>
<dbReference type="SMR" id="Q9VM65"/>
<dbReference type="BioGRID" id="60121">
    <property type="interactions" value="24"/>
</dbReference>
<dbReference type="ComplexPortal" id="CPX-2237">
    <property type="entry name" value="STRIPAK complex"/>
</dbReference>
<dbReference type="FunCoup" id="Q9VM65">
    <property type="interactions" value="496"/>
</dbReference>
<dbReference type="IntAct" id="Q9VM65">
    <property type="interactions" value="10"/>
</dbReference>
<dbReference type="STRING" id="7227.FBpp0304603"/>
<dbReference type="PaxDb" id="7227-FBpp0304603"/>
<dbReference type="EnsemblMetazoa" id="FBtr0079366">
    <property type="protein sequence ID" value="FBpp0078994"/>
    <property type="gene ID" value="FBgn0031871"/>
</dbReference>
<dbReference type="EnsemblMetazoa" id="FBtr0332325">
    <property type="protein sequence ID" value="FBpp0304603"/>
    <property type="gene ID" value="FBgn0031871"/>
</dbReference>
<dbReference type="GeneID" id="33971"/>
<dbReference type="KEGG" id="dme:Dmel_CG10158"/>
<dbReference type="UCSC" id="CG10158-RA">
    <property type="organism name" value="d. melanogaster"/>
</dbReference>
<dbReference type="AGR" id="FB:FBgn0031871"/>
<dbReference type="CTD" id="33971"/>
<dbReference type="FlyBase" id="FBgn0031871">
    <property type="gene designation" value="Fgop2"/>
</dbReference>
<dbReference type="VEuPathDB" id="VectorBase:FBgn0031871"/>
<dbReference type="eggNOG" id="ENOG502QSAD">
    <property type="taxonomic scope" value="Eukaryota"/>
</dbReference>
<dbReference type="GeneTree" id="ENSGT00390000018003"/>
<dbReference type="HOGENOM" id="CLU_864003_0_0_1"/>
<dbReference type="InParanoid" id="Q9VM65"/>
<dbReference type="OMA" id="CIEDYER"/>
<dbReference type="OrthoDB" id="21214at2759"/>
<dbReference type="PhylomeDB" id="Q9VM65"/>
<dbReference type="SignaLink" id="Q9VM65"/>
<dbReference type="BioGRID-ORCS" id="33971">
    <property type="hits" value="2 hits in 3 CRISPR screens"/>
</dbReference>
<dbReference type="GenomeRNAi" id="33971"/>
<dbReference type="PRO" id="PR:Q9VM65"/>
<dbReference type="Proteomes" id="UP000000803">
    <property type="component" value="Chromosome 2L"/>
</dbReference>
<dbReference type="Bgee" id="FBgn0031871">
    <property type="expression patterns" value="Expressed in testis and 92 other cell types or tissues"/>
</dbReference>
<dbReference type="ExpressionAtlas" id="Q9VM65">
    <property type="expression patterns" value="baseline and differential"/>
</dbReference>
<dbReference type="GO" id="GO:0090443">
    <property type="term" value="C:FAR/SIN/STRIPAK complex"/>
    <property type="evidence" value="ECO:0000314"/>
    <property type="project" value="FlyBase"/>
</dbReference>
<dbReference type="GO" id="GO:0035331">
    <property type="term" value="P:negative regulation of hippo signaling"/>
    <property type="evidence" value="ECO:0000315"/>
    <property type="project" value="FlyBase"/>
</dbReference>
<dbReference type="GO" id="GO:0046579">
    <property type="term" value="P:positive regulation of Ras protein signal transduction"/>
    <property type="evidence" value="ECO:0007003"/>
    <property type="project" value="FlyBase"/>
</dbReference>
<dbReference type="InterPro" id="IPR008555">
    <property type="entry name" value="SIKE"/>
</dbReference>
<dbReference type="PANTHER" id="PTHR12186:SF2">
    <property type="entry name" value="FGFR1 ONCOGENE PARTNER 2 HOMOLOG"/>
    <property type="match status" value="1"/>
</dbReference>
<dbReference type="PANTHER" id="PTHR12186">
    <property type="entry name" value="SIKE FAMILY MEMBER"/>
    <property type="match status" value="1"/>
</dbReference>
<dbReference type="Pfam" id="PF05769">
    <property type="entry name" value="SIKE"/>
    <property type="match status" value="1"/>
</dbReference>
<gene>
    <name evidence="4" type="primary">Fgop2</name>
    <name evidence="4" type="ORF">CG10158</name>
</gene>
<comment type="similarity">
    <text evidence="3">Belongs to the SIKE family.</text>
</comment>
<evidence type="ECO:0000255" key="1"/>
<evidence type="ECO:0000256" key="2">
    <source>
        <dbReference type="SAM" id="MobiDB-lite"/>
    </source>
</evidence>
<evidence type="ECO:0000305" key="3"/>
<evidence type="ECO:0000312" key="4">
    <source>
        <dbReference type="FlyBase" id="FBgn0031871"/>
    </source>
</evidence>
<feature type="chain" id="PRO_0000299057" description="FGFR1 oncogene partner 2 homolog">
    <location>
        <begin position="1"/>
        <end position="315"/>
    </location>
</feature>
<feature type="region of interest" description="Disordered" evidence="2">
    <location>
        <begin position="201"/>
        <end position="222"/>
    </location>
</feature>
<feature type="region of interest" description="Disordered" evidence="2">
    <location>
        <begin position="238"/>
        <end position="315"/>
    </location>
</feature>
<feature type="coiled-coil region" evidence="1">
    <location>
        <begin position="32"/>
        <end position="99"/>
    </location>
</feature>
<feature type="coiled-coil region" evidence="1">
    <location>
        <begin position="156"/>
        <end position="183"/>
    </location>
</feature>
<feature type="compositionally biased region" description="Polar residues" evidence="2">
    <location>
        <begin position="246"/>
        <end position="269"/>
    </location>
</feature>
<sequence length="315" mass="35150">MSNLSVGQIIMDAQRMASRVKDLDALGTALLEEAENNNRLVESLRQYQDDIESLNRISNNKTNADMVNRIQQQNINSSEILKENRELKIFIEDYERAMELMMQKYREHTVSKVLDSKFSFKELYNERMWQVIREQREKINEMAAVMQLAASVDDGVVQRELQTISQLRLENETLRELLQISKQYGSSQRPIRESDHLLEEKAVQTDSTADDSADDLSISGASVENMNNNSVIQMYSSPEQPAKVAGTTNSFNTAPVHSQSETQAPSVTLETAPPGEEPLANDNNNGPAVNTTSAPPPATTSNESVEDQATVAPAT</sequence>
<keyword id="KW-0175">Coiled coil</keyword>
<keyword id="KW-1185">Reference proteome</keyword>
<reference key="1">
    <citation type="journal article" date="2000" name="Science">
        <title>The genome sequence of Drosophila melanogaster.</title>
        <authorList>
            <person name="Adams M.D."/>
            <person name="Celniker S.E."/>
            <person name="Holt R.A."/>
            <person name="Evans C.A."/>
            <person name="Gocayne J.D."/>
            <person name="Amanatides P.G."/>
            <person name="Scherer S.E."/>
            <person name="Li P.W."/>
            <person name="Hoskins R.A."/>
            <person name="Galle R.F."/>
            <person name="George R.A."/>
            <person name="Lewis S.E."/>
            <person name="Richards S."/>
            <person name="Ashburner M."/>
            <person name="Henderson S.N."/>
            <person name="Sutton G.G."/>
            <person name="Wortman J.R."/>
            <person name="Yandell M.D."/>
            <person name="Zhang Q."/>
            <person name="Chen L.X."/>
            <person name="Brandon R.C."/>
            <person name="Rogers Y.-H.C."/>
            <person name="Blazej R.G."/>
            <person name="Champe M."/>
            <person name="Pfeiffer B.D."/>
            <person name="Wan K.H."/>
            <person name="Doyle C."/>
            <person name="Baxter E.G."/>
            <person name="Helt G."/>
            <person name="Nelson C.R."/>
            <person name="Miklos G.L.G."/>
            <person name="Abril J.F."/>
            <person name="Agbayani A."/>
            <person name="An H.-J."/>
            <person name="Andrews-Pfannkoch C."/>
            <person name="Baldwin D."/>
            <person name="Ballew R.M."/>
            <person name="Basu A."/>
            <person name="Baxendale J."/>
            <person name="Bayraktaroglu L."/>
            <person name="Beasley E.M."/>
            <person name="Beeson K.Y."/>
            <person name="Benos P.V."/>
            <person name="Berman B.P."/>
            <person name="Bhandari D."/>
            <person name="Bolshakov S."/>
            <person name="Borkova D."/>
            <person name="Botchan M.R."/>
            <person name="Bouck J."/>
            <person name="Brokstein P."/>
            <person name="Brottier P."/>
            <person name="Burtis K.C."/>
            <person name="Busam D.A."/>
            <person name="Butler H."/>
            <person name="Cadieu E."/>
            <person name="Center A."/>
            <person name="Chandra I."/>
            <person name="Cherry J.M."/>
            <person name="Cawley S."/>
            <person name="Dahlke C."/>
            <person name="Davenport L.B."/>
            <person name="Davies P."/>
            <person name="de Pablos B."/>
            <person name="Delcher A."/>
            <person name="Deng Z."/>
            <person name="Mays A.D."/>
            <person name="Dew I."/>
            <person name="Dietz S.M."/>
            <person name="Dodson K."/>
            <person name="Doup L.E."/>
            <person name="Downes M."/>
            <person name="Dugan-Rocha S."/>
            <person name="Dunkov B.C."/>
            <person name="Dunn P."/>
            <person name="Durbin K.J."/>
            <person name="Evangelista C.C."/>
            <person name="Ferraz C."/>
            <person name="Ferriera S."/>
            <person name="Fleischmann W."/>
            <person name="Fosler C."/>
            <person name="Gabrielian A.E."/>
            <person name="Garg N.S."/>
            <person name="Gelbart W.M."/>
            <person name="Glasser K."/>
            <person name="Glodek A."/>
            <person name="Gong F."/>
            <person name="Gorrell J.H."/>
            <person name="Gu Z."/>
            <person name="Guan P."/>
            <person name="Harris M."/>
            <person name="Harris N.L."/>
            <person name="Harvey D.A."/>
            <person name="Heiman T.J."/>
            <person name="Hernandez J.R."/>
            <person name="Houck J."/>
            <person name="Hostin D."/>
            <person name="Houston K.A."/>
            <person name="Howland T.J."/>
            <person name="Wei M.-H."/>
            <person name="Ibegwam C."/>
            <person name="Jalali M."/>
            <person name="Kalush F."/>
            <person name="Karpen G.H."/>
            <person name="Ke Z."/>
            <person name="Kennison J.A."/>
            <person name="Ketchum K.A."/>
            <person name="Kimmel B.E."/>
            <person name="Kodira C.D."/>
            <person name="Kraft C.L."/>
            <person name="Kravitz S."/>
            <person name="Kulp D."/>
            <person name="Lai Z."/>
            <person name="Lasko P."/>
            <person name="Lei Y."/>
            <person name="Levitsky A.A."/>
            <person name="Li J.H."/>
            <person name="Li Z."/>
            <person name="Liang Y."/>
            <person name="Lin X."/>
            <person name="Liu X."/>
            <person name="Mattei B."/>
            <person name="McIntosh T.C."/>
            <person name="McLeod M.P."/>
            <person name="McPherson D."/>
            <person name="Merkulov G."/>
            <person name="Milshina N.V."/>
            <person name="Mobarry C."/>
            <person name="Morris J."/>
            <person name="Moshrefi A."/>
            <person name="Mount S.M."/>
            <person name="Moy M."/>
            <person name="Murphy B."/>
            <person name="Murphy L."/>
            <person name="Muzny D.M."/>
            <person name="Nelson D.L."/>
            <person name="Nelson D.R."/>
            <person name="Nelson K.A."/>
            <person name="Nixon K."/>
            <person name="Nusskern D.R."/>
            <person name="Pacleb J.M."/>
            <person name="Palazzolo M."/>
            <person name="Pittman G.S."/>
            <person name="Pan S."/>
            <person name="Pollard J."/>
            <person name="Puri V."/>
            <person name="Reese M.G."/>
            <person name="Reinert K."/>
            <person name="Remington K."/>
            <person name="Saunders R.D.C."/>
            <person name="Scheeler F."/>
            <person name="Shen H."/>
            <person name="Shue B.C."/>
            <person name="Siden-Kiamos I."/>
            <person name="Simpson M."/>
            <person name="Skupski M.P."/>
            <person name="Smith T.J."/>
            <person name="Spier E."/>
            <person name="Spradling A.C."/>
            <person name="Stapleton M."/>
            <person name="Strong R."/>
            <person name="Sun E."/>
            <person name="Svirskas R."/>
            <person name="Tector C."/>
            <person name="Turner R."/>
            <person name="Venter E."/>
            <person name="Wang A.H."/>
            <person name="Wang X."/>
            <person name="Wang Z.-Y."/>
            <person name="Wassarman D.A."/>
            <person name="Weinstock G.M."/>
            <person name="Weissenbach J."/>
            <person name="Williams S.M."/>
            <person name="Woodage T."/>
            <person name="Worley K.C."/>
            <person name="Wu D."/>
            <person name="Yang S."/>
            <person name="Yao Q.A."/>
            <person name="Ye J."/>
            <person name="Yeh R.-F."/>
            <person name="Zaveri J.S."/>
            <person name="Zhan M."/>
            <person name="Zhang G."/>
            <person name="Zhao Q."/>
            <person name="Zheng L."/>
            <person name="Zheng X.H."/>
            <person name="Zhong F.N."/>
            <person name="Zhong W."/>
            <person name="Zhou X."/>
            <person name="Zhu S.C."/>
            <person name="Zhu X."/>
            <person name="Smith H.O."/>
            <person name="Gibbs R.A."/>
            <person name="Myers E.W."/>
            <person name="Rubin G.M."/>
            <person name="Venter J.C."/>
        </authorList>
    </citation>
    <scope>NUCLEOTIDE SEQUENCE [LARGE SCALE GENOMIC DNA]</scope>
    <source>
        <strain>Berkeley</strain>
    </source>
</reference>
<reference key="2">
    <citation type="journal article" date="2002" name="Genome Biol.">
        <title>Annotation of the Drosophila melanogaster euchromatic genome: a systematic review.</title>
        <authorList>
            <person name="Misra S."/>
            <person name="Crosby M.A."/>
            <person name="Mungall C.J."/>
            <person name="Matthews B.B."/>
            <person name="Campbell K.S."/>
            <person name="Hradecky P."/>
            <person name="Huang Y."/>
            <person name="Kaminker J.S."/>
            <person name="Millburn G.H."/>
            <person name="Prochnik S.E."/>
            <person name="Smith C.D."/>
            <person name="Tupy J.L."/>
            <person name="Whitfield E.J."/>
            <person name="Bayraktaroglu L."/>
            <person name="Berman B.P."/>
            <person name="Bettencourt B.R."/>
            <person name="Celniker S.E."/>
            <person name="de Grey A.D.N.J."/>
            <person name="Drysdale R.A."/>
            <person name="Harris N.L."/>
            <person name="Richter J."/>
            <person name="Russo S."/>
            <person name="Schroeder A.J."/>
            <person name="Shu S.Q."/>
            <person name="Stapleton M."/>
            <person name="Yamada C."/>
            <person name="Ashburner M."/>
            <person name="Gelbart W.M."/>
            <person name="Rubin G.M."/>
            <person name="Lewis S.E."/>
        </authorList>
    </citation>
    <scope>GENOME REANNOTATION</scope>
    <source>
        <strain>Berkeley</strain>
    </source>
</reference>
<reference key="3">
    <citation type="submission" date="2003-03" db="EMBL/GenBank/DDBJ databases">
        <authorList>
            <person name="Stapleton M."/>
            <person name="Brokstein P."/>
            <person name="Hong L."/>
            <person name="Agbayani A."/>
            <person name="Carlson J.W."/>
            <person name="Champe M."/>
            <person name="Chavez C."/>
            <person name="Dorsett V."/>
            <person name="Dresnek D."/>
            <person name="Farfan D."/>
            <person name="Frise E."/>
            <person name="George R.A."/>
            <person name="Gonzalez M."/>
            <person name="Guarin H."/>
            <person name="Kronmiller B."/>
            <person name="Li P.W."/>
            <person name="Liao G."/>
            <person name="Miranda A."/>
            <person name="Mungall C.J."/>
            <person name="Nunoo J."/>
            <person name="Pacleb J.M."/>
            <person name="Paragas V."/>
            <person name="Park S."/>
            <person name="Patel S."/>
            <person name="Phouanenavong S."/>
            <person name="Wan K.H."/>
            <person name="Yu C."/>
            <person name="Lewis S.E."/>
            <person name="Rubin G.M."/>
            <person name="Celniker S.E."/>
        </authorList>
    </citation>
    <scope>NUCLEOTIDE SEQUENCE [LARGE SCALE MRNA]</scope>
    <source>
        <strain>Berkeley</strain>
        <tissue>Embryo</tissue>
    </source>
</reference>
<proteinExistence type="evidence at transcript level"/>